<sequence>MHSWSAPRVPQFPSSIPAVADSPAAEVAALPELRLYDTADDRVKAVALPDDGAPVGIYVCGITPYDSTHLGHAATYNTFDLVNRYLRAAGHGVTYVQNVTDVDDPLFERADRDGVDWRELGKEQTDLFRSDMTQLRILPPEFFVGAMETIDEVVEMVSTLLDKGAAYVVDGEYPDIYADHTYTEQFGYESRYDEATMRELFAERGGDPEREGKRHPLDALLWRAHRTGEPEWDAPFGSGRPGWHVECAAIATNRLGEQFAIQGGGVDLRYPHHEYSAAHAEAACGNQRMAGHYVHTGMIGLEGTKMSKSLGNLEFVSALTAQGFDPAAIRVGLYAGHYREDRDWSAEVLNEAEDRLAKWRAAAAEENNPQRVAEVLATVTGHLANDLDTPSVLRTLDEWAAAVNESIGASGYQVTPAADRTAASQALTAGLDALLGVSV</sequence>
<name>MSHC2_CORU7</name>
<reference key="1">
    <citation type="journal article" date="2008" name="J. Biotechnol.">
        <title>The lifestyle of Corynebacterium urealyticum derived from its complete genome sequence established by pyrosequencing.</title>
        <authorList>
            <person name="Tauch A."/>
            <person name="Trost E."/>
            <person name="Tilker A."/>
            <person name="Ludewig U."/>
            <person name="Schneiker S."/>
            <person name="Goesmann A."/>
            <person name="Arnold W."/>
            <person name="Bekel T."/>
            <person name="Brinkrolf K."/>
            <person name="Brune I."/>
            <person name="Goetker S."/>
            <person name="Kalinowski J."/>
            <person name="Kamp P.-B."/>
            <person name="Lobo F.P."/>
            <person name="Viehoever P."/>
            <person name="Weisshaar B."/>
            <person name="Soriano F."/>
            <person name="Droege M."/>
            <person name="Puehler A."/>
        </authorList>
    </citation>
    <scope>NUCLEOTIDE SEQUENCE [LARGE SCALE GENOMIC DNA]</scope>
    <source>
        <strain>ATCC 43042 / DSM 7109</strain>
    </source>
</reference>
<organism>
    <name type="scientific">Corynebacterium urealyticum (strain ATCC 43042 / DSM 7109)</name>
    <dbReference type="NCBI Taxonomy" id="504474"/>
    <lineage>
        <taxon>Bacteria</taxon>
        <taxon>Bacillati</taxon>
        <taxon>Actinomycetota</taxon>
        <taxon>Actinomycetes</taxon>
        <taxon>Mycobacteriales</taxon>
        <taxon>Corynebacteriaceae</taxon>
        <taxon>Corynebacterium</taxon>
    </lineage>
</organism>
<evidence type="ECO:0000255" key="1">
    <source>
        <dbReference type="HAMAP-Rule" id="MF_01697"/>
    </source>
</evidence>
<dbReference type="EC" id="6.3.1.13" evidence="1"/>
<dbReference type="EMBL" id="AM942444">
    <property type="protein sequence ID" value="CAQ04992.1"/>
    <property type="molecule type" value="Genomic_DNA"/>
</dbReference>
<dbReference type="RefSeq" id="WP_012360280.1">
    <property type="nucleotide sequence ID" value="NC_010545.1"/>
</dbReference>
<dbReference type="SMR" id="B1VDU4"/>
<dbReference type="STRING" id="504474.cu1032"/>
<dbReference type="GeneID" id="60603810"/>
<dbReference type="KEGG" id="cur:cu1032"/>
<dbReference type="eggNOG" id="COG0215">
    <property type="taxonomic scope" value="Bacteria"/>
</dbReference>
<dbReference type="HOGENOM" id="CLU_013528_0_0_11"/>
<dbReference type="Proteomes" id="UP000001727">
    <property type="component" value="Chromosome"/>
</dbReference>
<dbReference type="GO" id="GO:0005829">
    <property type="term" value="C:cytosol"/>
    <property type="evidence" value="ECO:0007669"/>
    <property type="project" value="TreeGrafter"/>
</dbReference>
<dbReference type="GO" id="GO:0005524">
    <property type="term" value="F:ATP binding"/>
    <property type="evidence" value="ECO:0007669"/>
    <property type="project" value="UniProtKB-KW"/>
</dbReference>
<dbReference type="GO" id="GO:0035446">
    <property type="term" value="F:cysteine-glucosaminylinositol ligase activity"/>
    <property type="evidence" value="ECO:0007669"/>
    <property type="project" value="UniProtKB-UniRule"/>
</dbReference>
<dbReference type="GO" id="GO:0004817">
    <property type="term" value="F:cysteine-tRNA ligase activity"/>
    <property type="evidence" value="ECO:0007669"/>
    <property type="project" value="TreeGrafter"/>
</dbReference>
<dbReference type="GO" id="GO:0008270">
    <property type="term" value="F:zinc ion binding"/>
    <property type="evidence" value="ECO:0007669"/>
    <property type="project" value="UniProtKB-UniRule"/>
</dbReference>
<dbReference type="GO" id="GO:0006423">
    <property type="term" value="P:cysteinyl-tRNA aminoacylation"/>
    <property type="evidence" value="ECO:0007669"/>
    <property type="project" value="TreeGrafter"/>
</dbReference>
<dbReference type="GO" id="GO:0010125">
    <property type="term" value="P:mycothiol biosynthetic process"/>
    <property type="evidence" value="ECO:0007669"/>
    <property type="project" value="UniProtKB-UniRule"/>
</dbReference>
<dbReference type="CDD" id="cd00672">
    <property type="entry name" value="CysRS_core"/>
    <property type="match status" value="1"/>
</dbReference>
<dbReference type="Gene3D" id="1.20.120.640">
    <property type="entry name" value="Anticodon-binding domain of a subclass of class I aminoacyl-tRNA synthetases"/>
    <property type="match status" value="1"/>
</dbReference>
<dbReference type="Gene3D" id="3.40.50.620">
    <property type="entry name" value="HUPs"/>
    <property type="match status" value="1"/>
</dbReference>
<dbReference type="HAMAP" id="MF_01697">
    <property type="entry name" value="MshC"/>
    <property type="match status" value="1"/>
</dbReference>
<dbReference type="InterPro" id="IPR024909">
    <property type="entry name" value="Cys-tRNA/MSH_ligase"/>
</dbReference>
<dbReference type="InterPro" id="IPR017812">
    <property type="entry name" value="Mycothiol_ligase_MshC"/>
</dbReference>
<dbReference type="InterPro" id="IPR014729">
    <property type="entry name" value="Rossmann-like_a/b/a_fold"/>
</dbReference>
<dbReference type="InterPro" id="IPR032678">
    <property type="entry name" value="tRNA-synt_1_cat_dom"/>
</dbReference>
<dbReference type="NCBIfam" id="TIGR03447">
    <property type="entry name" value="mycothiol_MshC"/>
    <property type="match status" value="1"/>
</dbReference>
<dbReference type="PANTHER" id="PTHR10890:SF3">
    <property type="entry name" value="CYSTEINE--TRNA LIGASE, CYTOPLASMIC"/>
    <property type="match status" value="1"/>
</dbReference>
<dbReference type="PANTHER" id="PTHR10890">
    <property type="entry name" value="CYSTEINYL-TRNA SYNTHETASE"/>
    <property type="match status" value="1"/>
</dbReference>
<dbReference type="Pfam" id="PF01406">
    <property type="entry name" value="tRNA-synt_1e"/>
    <property type="match status" value="1"/>
</dbReference>
<dbReference type="PRINTS" id="PR00983">
    <property type="entry name" value="TRNASYNTHCYS"/>
</dbReference>
<dbReference type="SUPFAM" id="SSF52374">
    <property type="entry name" value="Nucleotidylyl transferase"/>
    <property type="match status" value="1"/>
</dbReference>
<keyword id="KW-0067">ATP-binding</keyword>
<keyword id="KW-0436">Ligase</keyword>
<keyword id="KW-0479">Metal-binding</keyword>
<keyword id="KW-0547">Nucleotide-binding</keyword>
<keyword id="KW-1185">Reference proteome</keyword>
<keyword id="KW-0862">Zinc</keyword>
<accession>B1VDU4</accession>
<feature type="chain" id="PRO_0000400444" description="L-cysteine:1D-myo-inositol 2-amino-2-deoxy-alpha-D-glucopyranoside ligase 2">
    <location>
        <begin position="1"/>
        <end position="439"/>
    </location>
</feature>
<feature type="short sequence motif" description="'HIGH' region" evidence="1">
    <location>
        <begin position="62"/>
        <end position="72"/>
    </location>
</feature>
<feature type="short sequence motif" description="'ERGGDP' region" evidence="1">
    <location>
        <begin position="203"/>
        <end position="208"/>
    </location>
</feature>
<feature type="short sequence motif" description="'KMSKS' region" evidence="1">
    <location>
        <begin position="305"/>
        <end position="309"/>
    </location>
</feature>
<feature type="binding site" evidence="1">
    <location>
        <begin position="60"/>
        <end position="63"/>
    </location>
    <ligand>
        <name>L-cysteinyl-5'-AMP</name>
        <dbReference type="ChEBI" id="CHEBI:144924"/>
    </ligand>
</feature>
<feature type="binding site" evidence="1">
    <location>
        <position position="60"/>
    </location>
    <ligand>
        <name>Zn(2+)</name>
        <dbReference type="ChEBI" id="CHEBI:29105"/>
    </ligand>
</feature>
<feature type="binding site" evidence="1">
    <location>
        <position position="75"/>
    </location>
    <ligand>
        <name>L-cysteinyl-5'-AMP</name>
        <dbReference type="ChEBI" id="CHEBI:144924"/>
    </ligand>
</feature>
<feature type="binding site" evidence="1">
    <location>
        <begin position="98"/>
        <end position="100"/>
    </location>
    <ligand>
        <name>L-cysteinyl-5'-AMP</name>
        <dbReference type="ChEBI" id="CHEBI:144924"/>
    </ligand>
</feature>
<feature type="binding site" evidence="1">
    <location>
        <position position="243"/>
    </location>
    <ligand>
        <name>L-cysteinyl-5'-AMP</name>
        <dbReference type="ChEBI" id="CHEBI:144924"/>
    </ligand>
</feature>
<feature type="binding site" evidence="1">
    <location>
        <position position="247"/>
    </location>
    <ligand>
        <name>Zn(2+)</name>
        <dbReference type="ChEBI" id="CHEBI:29105"/>
    </ligand>
</feature>
<feature type="binding site" evidence="1">
    <location>
        <begin position="265"/>
        <end position="267"/>
    </location>
    <ligand>
        <name>L-cysteinyl-5'-AMP</name>
        <dbReference type="ChEBI" id="CHEBI:144924"/>
    </ligand>
</feature>
<feature type="binding site" evidence="1">
    <location>
        <position position="272"/>
    </location>
    <ligand>
        <name>Zn(2+)</name>
        <dbReference type="ChEBI" id="CHEBI:29105"/>
    </ligand>
</feature>
<feature type="binding site" evidence="1">
    <location>
        <position position="299"/>
    </location>
    <ligand>
        <name>L-cysteinyl-5'-AMP</name>
        <dbReference type="ChEBI" id="CHEBI:144924"/>
    </ligand>
</feature>
<gene>
    <name evidence="1" type="primary">mshC2</name>
    <name type="ordered locus">cu1032</name>
</gene>
<protein>
    <recommendedName>
        <fullName evidence="1">L-cysteine:1D-myo-inositol 2-amino-2-deoxy-alpha-D-glucopyranoside ligase 2</fullName>
        <shortName evidence="1">L-Cys:GlcN-Ins ligase 2</shortName>
        <ecNumber evidence="1">6.3.1.13</ecNumber>
    </recommendedName>
    <alternativeName>
        <fullName evidence="1">Mycothiol ligase 2</fullName>
        <shortName evidence="1">MSH ligase 2</shortName>
    </alternativeName>
</protein>
<comment type="function">
    <text evidence="1">Catalyzes the ATP-dependent condensation of GlcN-Ins and L-cysteine to form L-Cys-GlcN-Ins.</text>
</comment>
<comment type="catalytic activity">
    <reaction evidence="1">
        <text>1D-myo-inositol 2-amino-2-deoxy-alpha-D-glucopyranoside + L-cysteine + ATP = 1D-myo-inositol 2-(L-cysteinylamino)-2-deoxy-alpha-D-glucopyranoside + AMP + diphosphate + H(+)</text>
        <dbReference type="Rhea" id="RHEA:26176"/>
        <dbReference type="ChEBI" id="CHEBI:15378"/>
        <dbReference type="ChEBI" id="CHEBI:30616"/>
        <dbReference type="ChEBI" id="CHEBI:33019"/>
        <dbReference type="ChEBI" id="CHEBI:35235"/>
        <dbReference type="ChEBI" id="CHEBI:58886"/>
        <dbReference type="ChEBI" id="CHEBI:58887"/>
        <dbReference type="ChEBI" id="CHEBI:456215"/>
        <dbReference type="EC" id="6.3.1.13"/>
    </reaction>
</comment>
<comment type="cofactor">
    <cofactor evidence="1">
        <name>Zn(2+)</name>
        <dbReference type="ChEBI" id="CHEBI:29105"/>
    </cofactor>
    <text evidence="1">Binds 1 zinc ion per subunit.</text>
</comment>
<comment type="subunit">
    <text evidence="1">Monomer.</text>
</comment>
<comment type="similarity">
    <text evidence="1">Belongs to the class-I aminoacyl-tRNA synthetase family. MshC subfamily.</text>
</comment>
<proteinExistence type="inferred from homology"/>